<organism>
    <name type="scientific">Gluconacetobacter diazotrophicus (strain ATCC 49037 / DSM 5601 / CCUG 37298 / CIP 103539 / LMG 7603 / PAl5)</name>
    <dbReference type="NCBI Taxonomy" id="272568"/>
    <lineage>
        <taxon>Bacteria</taxon>
        <taxon>Pseudomonadati</taxon>
        <taxon>Pseudomonadota</taxon>
        <taxon>Alphaproteobacteria</taxon>
        <taxon>Acetobacterales</taxon>
        <taxon>Acetobacteraceae</taxon>
        <taxon>Gluconacetobacter</taxon>
    </lineage>
</organism>
<accession>A9HAV7</accession>
<accession>B5ZH33</accession>
<evidence type="ECO:0000255" key="1">
    <source>
        <dbReference type="HAMAP-Rule" id="MF_00031"/>
    </source>
</evidence>
<name>RUVA_GLUDA</name>
<proteinExistence type="inferred from homology"/>
<keyword id="KW-0963">Cytoplasm</keyword>
<keyword id="KW-0227">DNA damage</keyword>
<keyword id="KW-0233">DNA recombination</keyword>
<keyword id="KW-0234">DNA repair</keyword>
<keyword id="KW-0238">DNA-binding</keyword>
<keyword id="KW-1185">Reference proteome</keyword>
<reference key="1">
    <citation type="journal article" date="2009" name="BMC Genomics">
        <title>Complete genome sequence of the sugarcane nitrogen-fixing endophyte Gluconacetobacter diazotrophicus Pal5.</title>
        <authorList>
            <person name="Bertalan M."/>
            <person name="Albano R."/>
            <person name="de Padua V."/>
            <person name="Rouws L."/>
            <person name="Rojas C."/>
            <person name="Hemerly A."/>
            <person name="Teixeira K."/>
            <person name="Schwab S."/>
            <person name="Araujo J."/>
            <person name="Oliveira A."/>
            <person name="Franca L."/>
            <person name="Magalhaes V."/>
            <person name="Alqueres S."/>
            <person name="Cardoso A."/>
            <person name="Almeida W."/>
            <person name="Loureiro M.M."/>
            <person name="Nogueira E."/>
            <person name="Cidade D."/>
            <person name="Oliveira D."/>
            <person name="Simao T."/>
            <person name="Macedo J."/>
            <person name="Valadao A."/>
            <person name="Dreschsel M."/>
            <person name="Freitas F."/>
            <person name="Vidal M."/>
            <person name="Guedes H."/>
            <person name="Rodrigues E."/>
            <person name="Meneses C."/>
            <person name="Brioso P."/>
            <person name="Pozzer L."/>
            <person name="Figueiredo D."/>
            <person name="Montano H."/>
            <person name="Junior J."/>
            <person name="de Souza Filho G."/>
            <person name="Martin Quintana Flores V."/>
            <person name="Ferreira B."/>
            <person name="Branco A."/>
            <person name="Gonzalez P."/>
            <person name="Guillobel H."/>
            <person name="Lemos M."/>
            <person name="Seibel L."/>
            <person name="Macedo J."/>
            <person name="Alves-Ferreira M."/>
            <person name="Sachetto-Martins G."/>
            <person name="Coelho A."/>
            <person name="Santos E."/>
            <person name="Amaral G."/>
            <person name="Neves A."/>
            <person name="Pacheco A.B."/>
            <person name="Carvalho D."/>
            <person name="Lery L."/>
            <person name="Bisch P."/>
            <person name="Rossle S.C."/>
            <person name="Urmenyi T."/>
            <person name="Rael Pereira A."/>
            <person name="Silva R."/>
            <person name="Rondinelli E."/>
            <person name="von Kruger W."/>
            <person name="Martins O."/>
            <person name="Baldani J.I."/>
            <person name="Ferreira P.C."/>
        </authorList>
    </citation>
    <scope>NUCLEOTIDE SEQUENCE [LARGE SCALE GENOMIC DNA]</scope>
    <source>
        <strain>ATCC 49037 / DSM 5601 / CCUG 37298 / CIP 103539 / LMG 7603 / PAl5</strain>
    </source>
</reference>
<reference key="2">
    <citation type="journal article" date="2010" name="Stand. Genomic Sci.">
        <title>Two genome sequences of the same bacterial strain, Gluconacetobacter diazotrophicus PAl 5, suggest a new standard in genome sequence submission.</title>
        <authorList>
            <person name="Giongo A."/>
            <person name="Tyler H.L."/>
            <person name="Zipperer U.N."/>
            <person name="Triplett E.W."/>
        </authorList>
    </citation>
    <scope>NUCLEOTIDE SEQUENCE [LARGE SCALE GENOMIC DNA]</scope>
    <source>
        <strain>ATCC 49037 / DSM 5601 / CCUG 37298 / CIP 103539 / LMG 7603 / PAl5</strain>
    </source>
</reference>
<comment type="function">
    <text evidence="1">The RuvA-RuvB-RuvC complex processes Holliday junction (HJ) DNA during genetic recombination and DNA repair, while the RuvA-RuvB complex plays an important role in the rescue of blocked DNA replication forks via replication fork reversal (RFR). RuvA specifically binds to HJ cruciform DNA, conferring on it an open structure. The RuvB hexamer acts as an ATP-dependent pump, pulling dsDNA into and through the RuvAB complex. HJ branch migration allows RuvC to scan DNA until it finds its consensus sequence, where it cleaves and resolves the cruciform DNA.</text>
</comment>
<comment type="subunit">
    <text evidence="1">Homotetramer. Forms an RuvA(8)-RuvB(12)-Holliday junction (HJ) complex. HJ DNA is sandwiched between 2 RuvA tetramers; dsDNA enters through RuvA and exits via RuvB. An RuvB hexamer assembles on each DNA strand where it exits the tetramer. Each RuvB hexamer is contacted by two RuvA subunits (via domain III) on 2 adjacent RuvB subunits; this complex drives branch migration. In the full resolvosome a probable DNA-RuvA(4)-RuvB(12)-RuvC(2) complex forms which resolves the HJ.</text>
</comment>
<comment type="subcellular location">
    <subcellularLocation>
        <location evidence="1">Cytoplasm</location>
    </subcellularLocation>
</comment>
<comment type="domain">
    <text evidence="1">Has three domains with a flexible linker between the domains II and III and assumes an 'L' shape. Domain III is highly mobile and contacts RuvB.</text>
</comment>
<comment type="similarity">
    <text evidence="1">Belongs to the RuvA family.</text>
</comment>
<gene>
    <name evidence="1" type="primary">ruvA</name>
    <name type="ordered locus">GDI0800</name>
    <name type="ordered locus">Gdia_1217</name>
</gene>
<feature type="chain" id="PRO_1000074422" description="Holliday junction branch migration complex subunit RuvA">
    <location>
        <begin position="1"/>
        <end position="200"/>
    </location>
</feature>
<feature type="region of interest" description="Domain I" evidence="1">
    <location>
        <begin position="1"/>
        <end position="64"/>
    </location>
</feature>
<feature type="region of interest" description="Domain II" evidence="1">
    <location>
        <begin position="65"/>
        <end position="143"/>
    </location>
</feature>
<feature type="region of interest" description="Flexible linker" evidence="1">
    <location>
        <begin position="144"/>
        <end position="147"/>
    </location>
</feature>
<feature type="region of interest" description="Domain III" evidence="1">
    <location>
        <begin position="148"/>
        <end position="200"/>
    </location>
</feature>
<sequence length="200" mass="20825">MIAHLTGLVGQMESDRCVVDVGGVGYLVHASTRTLSALPRPPDVTRVLVETVVREDAFLLYGFAEAAERDWFRLLTTVQGVGAKVALAILSALSPGDLAGVIAAADKASLTRVSGVGARLAERILTELRDKAGRMPAGPGVTIAAPPASGGVEADALLALAGLGFRRAEAQPVVGRILARLDGKADLDVVIRESLRELAR</sequence>
<protein>
    <recommendedName>
        <fullName evidence="1">Holliday junction branch migration complex subunit RuvA</fullName>
    </recommendedName>
</protein>
<dbReference type="EMBL" id="AM889285">
    <property type="protein sequence ID" value="CAP54743.1"/>
    <property type="molecule type" value="Genomic_DNA"/>
</dbReference>
<dbReference type="EMBL" id="CP001189">
    <property type="protein sequence ID" value="ACI51000.1"/>
    <property type="molecule type" value="Genomic_DNA"/>
</dbReference>
<dbReference type="RefSeq" id="WP_012223551.1">
    <property type="nucleotide sequence ID" value="NC_010125.1"/>
</dbReference>
<dbReference type="SMR" id="A9HAV7"/>
<dbReference type="STRING" id="272568.GDI0800"/>
<dbReference type="KEGG" id="gdi:GDI0800"/>
<dbReference type="KEGG" id="gdj:Gdia_1217"/>
<dbReference type="eggNOG" id="COG0632">
    <property type="taxonomic scope" value="Bacteria"/>
</dbReference>
<dbReference type="HOGENOM" id="CLU_087936_3_0_5"/>
<dbReference type="OrthoDB" id="5293449at2"/>
<dbReference type="Proteomes" id="UP000001176">
    <property type="component" value="Chromosome"/>
</dbReference>
<dbReference type="GO" id="GO:0005737">
    <property type="term" value="C:cytoplasm"/>
    <property type="evidence" value="ECO:0007669"/>
    <property type="project" value="UniProtKB-SubCell"/>
</dbReference>
<dbReference type="GO" id="GO:0009379">
    <property type="term" value="C:Holliday junction helicase complex"/>
    <property type="evidence" value="ECO:0007669"/>
    <property type="project" value="InterPro"/>
</dbReference>
<dbReference type="GO" id="GO:0048476">
    <property type="term" value="C:Holliday junction resolvase complex"/>
    <property type="evidence" value="ECO:0007669"/>
    <property type="project" value="UniProtKB-UniRule"/>
</dbReference>
<dbReference type="GO" id="GO:0005524">
    <property type="term" value="F:ATP binding"/>
    <property type="evidence" value="ECO:0007669"/>
    <property type="project" value="InterPro"/>
</dbReference>
<dbReference type="GO" id="GO:0000400">
    <property type="term" value="F:four-way junction DNA binding"/>
    <property type="evidence" value="ECO:0007669"/>
    <property type="project" value="UniProtKB-UniRule"/>
</dbReference>
<dbReference type="GO" id="GO:0009378">
    <property type="term" value="F:four-way junction helicase activity"/>
    <property type="evidence" value="ECO:0007669"/>
    <property type="project" value="InterPro"/>
</dbReference>
<dbReference type="GO" id="GO:0006310">
    <property type="term" value="P:DNA recombination"/>
    <property type="evidence" value="ECO:0007669"/>
    <property type="project" value="UniProtKB-UniRule"/>
</dbReference>
<dbReference type="GO" id="GO:0006281">
    <property type="term" value="P:DNA repair"/>
    <property type="evidence" value="ECO:0007669"/>
    <property type="project" value="UniProtKB-UniRule"/>
</dbReference>
<dbReference type="Gene3D" id="1.10.150.20">
    <property type="entry name" value="5' to 3' exonuclease, C-terminal subdomain"/>
    <property type="match status" value="1"/>
</dbReference>
<dbReference type="Gene3D" id="1.10.8.10">
    <property type="entry name" value="DNA helicase RuvA subunit, C-terminal domain"/>
    <property type="match status" value="1"/>
</dbReference>
<dbReference type="Gene3D" id="2.40.50.140">
    <property type="entry name" value="Nucleic acid-binding proteins"/>
    <property type="match status" value="1"/>
</dbReference>
<dbReference type="HAMAP" id="MF_00031">
    <property type="entry name" value="DNA_HJ_migration_RuvA"/>
    <property type="match status" value="1"/>
</dbReference>
<dbReference type="InterPro" id="IPR013849">
    <property type="entry name" value="DNA_helicase_Holl-junc_RuvA_I"/>
</dbReference>
<dbReference type="InterPro" id="IPR003583">
    <property type="entry name" value="Hlx-hairpin-Hlx_DNA-bd_motif"/>
</dbReference>
<dbReference type="InterPro" id="IPR012340">
    <property type="entry name" value="NA-bd_OB-fold"/>
</dbReference>
<dbReference type="InterPro" id="IPR000085">
    <property type="entry name" value="RuvA"/>
</dbReference>
<dbReference type="InterPro" id="IPR010994">
    <property type="entry name" value="RuvA_2-like"/>
</dbReference>
<dbReference type="InterPro" id="IPR011114">
    <property type="entry name" value="RuvA_C"/>
</dbReference>
<dbReference type="InterPro" id="IPR036267">
    <property type="entry name" value="RuvA_C_sf"/>
</dbReference>
<dbReference type="NCBIfam" id="TIGR00084">
    <property type="entry name" value="ruvA"/>
    <property type="match status" value="1"/>
</dbReference>
<dbReference type="Pfam" id="PF14520">
    <property type="entry name" value="HHH_5"/>
    <property type="match status" value="1"/>
</dbReference>
<dbReference type="Pfam" id="PF07499">
    <property type="entry name" value="RuvA_C"/>
    <property type="match status" value="1"/>
</dbReference>
<dbReference type="Pfam" id="PF01330">
    <property type="entry name" value="RuvA_N"/>
    <property type="match status" value="1"/>
</dbReference>
<dbReference type="SMART" id="SM00278">
    <property type="entry name" value="HhH1"/>
    <property type="match status" value="2"/>
</dbReference>
<dbReference type="SUPFAM" id="SSF46929">
    <property type="entry name" value="DNA helicase RuvA subunit, C-terminal domain"/>
    <property type="match status" value="1"/>
</dbReference>
<dbReference type="SUPFAM" id="SSF50249">
    <property type="entry name" value="Nucleic acid-binding proteins"/>
    <property type="match status" value="1"/>
</dbReference>
<dbReference type="SUPFAM" id="SSF47781">
    <property type="entry name" value="RuvA domain 2-like"/>
    <property type="match status" value="1"/>
</dbReference>